<proteinExistence type="evidence at transcript level"/>
<name>4CL1_PETCR</name>
<feature type="chain" id="PRO_0000193033" description="4-coumarate--CoA ligase 1">
    <location>
        <begin position="1"/>
        <end position="544"/>
    </location>
</feature>
<feature type="region of interest" description="SBD1" evidence="2">
    <location>
        <begin position="263"/>
        <end position="332"/>
    </location>
</feature>
<feature type="region of interest" description="SBD2" evidence="2">
    <location>
        <begin position="333"/>
        <end position="400"/>
    </location>
</feature>
<feature type="binding site" evidence="1">
    <location>
        <position position="190"/>
    </location>
    <ligand>
        <name>ATP</name>
        <dbReference type="ChEBI" id="CHEBI:30616"/>
    </ligand>
</feature>
<feature type="binding site" evidence="1">
    <location>
        <position position="191"/>
    </location>
    <ligand>
        <name>ATP</name>
        <dbReference type="ChEBI" id="CHEBI:30616"/>
    </ligand>
</feature>
<feature type="binding site" evidence="1">
    <location>
        <position position="192"/>
    </location>
    <ligand>
        <name>ATP</name>
        <dbReference type="ChEBI" id="CHEBI:30616"/>
    </ligand>
</feature>
<feature type="binding site" evidence="1">
    <location>
        <position position="193"/>
    </location>
    <ligand>
        <name>ATP</name>
        <dbReference type="ChEBI" id="CHEBI:30616"/>
    </ligand>
</feature>
<feature type="binding site" evidence="1">
    <location>
        <position position="194"/>
    </location>
    <ligand>
        <name>ATP</name>
        <dbReference type="ChEBI" id="CHEBI:30616"/>
    </ligand>
</feature>
<feature type="binding site" evidence="1">
    <location>
        <position position="198"/>
    </location>
    <ligand>
        <name>ATP</name>
        <dbReference type="ChEBI" id="CHEBI:30616"/>
    </ligand>
</feature>
<feature type="binding site" evidence="1">
    <location>
        <position position="240"/>
    </location>
    <ligand>
        <name>(E)-4-coumaroyl-AMP</name>
        <dbReference type="ChEBI" id="CHEBI:192348"/>
    </ligand>
</feature>
<feature type="binding site" evidence="1">
    <location>
        <position position="261"/>
    </location>
    <ligand>
        <name>CoA</name>
        <dbReference type="ChEBI" id="CHEBI:57287"/>
    </ligand>
</feature>
<feature type="binding site" evidence="1">
    <location>
        <position position="310"/>
    </location>
    <ligand>
        <name>(E)-4-coumaroyl-AMP</name>
        <dbReference type="ChEBI" id="CHEBI:192348"/>
    </ligand>
</feature>
<feature type="binding site" evidence="1">
    <location>
        <position position="332"/>
    </location>
    <ligand>
        <name>(E)-4-coumaroyl-AMP</name>
        <dbReference type="ChEBI" id="CHEBI:192348"/>
    </ligand>
</feature>
<feature type="binding site" evidence="1">
    <location>
        <position position="332"/>
    </location>
    <ligand>
        <name>ATP</name>
        <dbReference type="ChEBI" id="CHEBI:30616"/>
    </ligand>
</feature>
<feature type="binding site" evidence="1">
    <location>
        <position position="333"/>
    </location>
    <ligand>
        <name>(E)-4-coumaroyl-AMP</name>
        <dbReference type="ChEBI" id="CHEBI:192348"/>
    </ligand>
</feature>
<feature type="binding site" evidence="1">
    <location>
        <position position="333"/>
    </location>
    <ligand>
        <name>ATP</name>
        <dbReference type="ChEBI" id="CHEBI:30616"/>
    </ligand>
</feature>
<feature type="binding site" evidence="1">
    <location>
        <position position="337"/>
    </location>
    <ligand>
        <name>(E)-4-coumaroyl-AMP</name>
        <dbReference type="ChEBI" id="CHEBI:192348"/>
    </ligand>
</feature>
<feature type="binding site" evidence="1">
    <location>
        <position position="337"/>
    </location>
    <ligand>
        <name>ATP</name>
        <dbReference type="ChEBI" id="CHEBI:30616"/>
    </ligand>
</feature>
<feature type="binding site" evidence="1">
    <location>
        <position position="345"/>
    </location>
    <ligand>
        <name>(E)-4-coumaroyl-AMP</name>
        <dbReference type="ChEBI" id="CHEBI:192348"/>
    </ligand>
</feature>
<feature type="binding site" evidence="1">
    <location>
        <position position="421"/>
    </location>
    <ligand>
        <name>ATP</name>
        <dbReference type="ChEBI" id="CHEBI:30616"/>
    </ligand>
</feature>
<feature type="binding site" evidence="1">
    <location>
        <position position="436"/>
    </location>
    <ligand>
        <name>ATP</name>
        <dbReference type="ChEBI" id="CHEBI:30616"/>
    </ligand>
</feature>
<feature type="binding site" evidence="1">
    <location>
        <position position="438"/>
    </location>
    <ligand>
        <name>(E)-4-coumaroyl-AMP</name>
        <dbReference type="ChEBI" id="CHEBI:192348"/>
    </ligand>
</feature>
<feature type="binding site" evidence="1">
    <location>
        <position position="442"/>
    </location>
    <ligand>
        <name>(E)-4-coumaroyl-AMP</name>
        <dbReference type="ChEBI" id="CHEBI:192348"/>
    </ligand>
</feature>
<feature type="binding site" evidence="1">
    <location>
        <position position="444"/>
    </location>
    <ligand>
        <name>CoA</name>
        <dbReference type="ChEBI" id="CHEBI:57287"/>
    </ligand>
</feature>
<feature type="binding site" evidence="1">
    <location>
        <position position="445"/>
    </location>
    <ligand>
        <name>CoA</name>
        <dbReference type="ChEBI" id="CHEBI:57287"/>
    </ligand>
</feature>
<feature type="binding site" evidence="1">
    <location>
        <position position="527"/>
    </location>
    <ligand>
        <name>ATP</name>
        <dbReference type="ChEBI" id="CHEBI:30616"/>
    </ligand>
</feature>
<organism>
    <name type="scientific">Petroselinum crispum</name>
    <name type="common">Parsley</name>
    <name type="synonym">Petroselinum hortense</name>
    <dbReference type="NCBI Taxonomy" id="4043"/>
    <lineage>
        <taxon>Eukaryota</taxon>
        <taxon>Viridiplantae</taxon>
        <taxon>Streptophyta</taxon>
        <taxon>Embryophyta</taxon>
        <taxon>Tracheophyta</taxon>
        <taxon>Spermatophyta</taxon>
        <taxon>Magnoliopsida</taxon>
        <taxon>eudicotyledons</taxon>
        <taxon>Gunneridae</taxon>
        <taxon>Pentapetalae</taxon>
        <taxon>asterids</taxon>
        <taxon>campanulids</taxon>
        <taxon>Apiales</taxon>
        <taxon>Apiaceae</taxon>
        <taxon>Apioideae</taxon>
        <taxon>apioid superclade</taxon>
        <taxon>Apieae</taxon>
        <taxon>Petroselinum</taxon>
    </lineage>
</organism>
<accession>P14912</accession>
<gene>
    <name type="primary">4CL1</name>
    <name type="synonym">4CL-1</name>
</gene>
<sequence>MGDCVAPKEDLIFRSKLPDIYIPKHLPLHTYCFENISKVGDKSCLINGATGETFTYSQVELLSRKVASGLNKLGIQQGDTIMLLLPNSPEYFFAFLGASYRGAISTMANPFFTSAEVIKQLKASQAKLIITQACYVDKVKDYAAEKNIQIICIDDAPQDCLHFSKLMEADESEMPEVVINSDDVVALPYSSGTTGLPKGVMLTHKGLVTSVAQQVDGDNPNLYMHSEDVMICILPLFHIYSLNAVLCCGLRAGVTILIMQKFDIVPFLELIQKYKVTIGPFVPPIVLAIAKSPVVDKYDLSSVRTVMSGAAPLGKELEDAVRAKFPNAKLGQGYGMTEAGPVLAMCLAFAKEPYEIKSGACGTVVRNAEMKIVDPETNASLPRNQRGEICIRGDQIMKGYLNDPESTRTTIDEEGWLHTGDIGFIDDDDELFIVDRLKEIIKYKGFQVAPAELEALLLTHPTISDAAVVPMIDEKAGEVPVAFVVRTNGFTTTEEEIKQFVSKQVVFYKRIFRVFFVDAIPKSPSGKILRKDLRARIASGDLPK</sequence>
<protein>
    <recommendedName>
        <fullName>4-coumarate--CoA ligase 1</fullName>
        <shortName>4CL 1</shortName>
        <ecNumber evidence="1">6.2.1.12</ecNumber>
    </recommendedName>
    <alternativeName>
        <fullName>4-coumaroyl-CoA synthase 1</fullName>
    </alternativeName>
</protein>
<comment type="function">
    <text evidence="1">Carboxylate--CoA ligase that may use 4-coumarate as substrate. Follows a two-step reaction mechanism, wherein the carboxylate substrate first undergoes adenylation by ATP, followed by a thioesterification in the presence of CoA to yield the final CoA thioester.</text>
</comment>
<comment type="catalytic activity">
    <reaction evidence="1">
        <text>(E)-4-coumarate + ATP + CoA = (E)-4-coumaroyl-CoA + AMP + diphosphate</text>
        <dbReference type="Rhea" id="RHEA:19641"/>
        <dbReference type="ChEBI" id="CHEBI:12876"/>
        <dbReference type="ChEBI" id="CHEBI:30616"/>
        <dbReference type="ChEBI" id="CHEBI:33019"/>
        <dbReference type="ChEBI" id="CHEBI:57287"/>
        <dbReference type="ChEBI" id="CHEBI:85008"/>
        <dbReference type="ChEBI" id="CHEBI:456215"/>
        <dbReference type="EC" id="6.2.1.12"/>
    </reaction>
    <physiologicalReaction direction="left-to-right" evidence="1">
        <dbReference type="Rhea" id="RHEA:19642"/>
    </physiologicalReaction>
</comment>
<comment type="catalytic activity">
    <reaction evidence="1">
        <text>(E)-4-coumarate + ATP + H(+) = (E)-4-coumaroyl-AMP + diphosphate</text>
        <dbReference type="Rhea" id="RHEA:72419"/>
        <dbReference type="ChEBI" id="CHEBI:12876"/>
        <dbReference type="ChEBI" id="CHEBI:15378"/>
        <dbReference type="ChEBI" id="CHEBI:30616"/>
        <dbReference type="ChEBI" id="CHEBI:33019"/>
        <dbReference type="ChEBI" id="CHEBI:192348"/>
    </reaction>
    <physiologicalReaction direction="left-to-right" evidence="1">
        <dbReference type="Rhea" id="RHEA:72420"/>
    </physiologicalReaction>
</comment>
<comment type="catalytic activity">
    <reaction evidence="1">
        <text>(E)-4-coumaroyl-AMP + CoA = (E)-4-coumaroyl-CoA + AMP + H(+)</text>
        <dbReference type="Rhea" id="RHEA:72423"/>
        <dbReference type="ChEBI" id="CHEBI:15378"/>
        <dbReference type="ChEBI" id="CHEBI:57287"/>
        <dbReference type="ChEBI" id="CHEBI:85008"/>
        <dbReference type="ChEBI" id="CHEBI:192348"/>
        <dbReference type="ChEBI" id="CHEBI:456215"/>
    </reaction>
    <physiologicalReaction direction="left-to-right" evidence="1">
        <dbReference type="Rhea" id="RHEA:72424"/>
    </physiologicalReaction>
</comment>
<comment type="cofactor">
    <cofactor evidence="1">
        <name>Mg(2+)</name>
        <dbReference type="ChEBI" id="CHEBI:18420"/>
    </cofactor>
</comment>
<comment type="pathway">
    <text evidence="2">Phytoalexin biosynthesis; 3,4',5-trihydroxystilbene biosynthesis; 3,4',5-trihydroxystilbene from trans-4-coumarate: step 1/2.</text>
</comment>
<comment type="induction">
    <text>By fungal elicitor and UV irradiation.</text>
</comment>
<comment type="domain">
    <text evidence="2">Both substrate-binding domains (SBD1 and SBD2) are involved in the substrate recognition, and are sufficient to confer the substrate specificity.</text>
</comment>
<comment type="similarity">
    <text evidence="3">Belongs to the ATP-dependent AMP-binding enzyme family.</text>
</comment>
<keyword id="KW-0067">ATP-binding</keyword>
<keyword id="KW-0436">Ligase</keyword>
<keyword id="KW-0460">Magnesium</keyword>
<keyword id="KW-0547">Nucleotide-binding</keyword>
<keyword id="KW-0587">Phenylpropanoid metabolism</keyword>
<reference key="1">
    <citation type="journal article" date="1988" name="Eur. J. Biochem.">
        <title>Primary structures and catalytic properties of isoenzymes encoded by the two 4-coumarate:CoA ligase genes in parsley.</title>
        <authorList>
            <person name="Lozoya E."/>
            <person name="Hoffmann H."/>
            <person name="Douglas C."/>
            <person name="Schulz W."/>
            <person name="Scheel D."/>
            <person name="Hahlbrock K."/>
        </authorList>
    </citation>
    <scope>NUCLEOTIDE SEQUENCE [MRNA]</scope>
</reference>
<reference key="2">
    <citation type="journal article" date="1987" name="EMBO J.">
        <title>Structure and elicitor or U.V.-light-stimulated expression of two 4-coumarate:CoA ligase genes in parsley.</title>
        <authorList>
            <person name="Douglas C."/>
            <person name="Hoffmann H."/>
            <person name="Schulz W."/>
            <person name="Hahlbrock K."/>
        </authorList>
    </citation>
    <scope>NUCLEOTIDE SEQUENCE [GENOMIC DNA] OF 1-8</scope>
</reference>
<evidence type="ECO:0000250" key="1">
    <source>
        <dbReference type="UniProtKB" id="O24146"/>
    </source>
</evidence>
<evidence type="ECO:0000250" key="2">
    <source>
        <dbReference type="UniProtKB" id="Q42524"/>
    </source>
</evidence>
<evidence type="ECO:0000305" key="3"/>
<dbReference type="EC" id="6.2.1.12" evidence="1"/>
<dbReference type="EMBL" id="X13324">
    <property type="protein sequence ID" value="CAA31696.1"/>
    <property type="molecule type" value="mRNA"/>
</dbReference>
<dbReference type="EMBL" id="X05350">
    <property type="protein sequence ID" value="CAA28959.1"/>
    <property type="molecule type" value="Genomic_DNA"/>
</dbReference>
<dbReference type="PIR" id="S01667">
    <property type="entry name" value="S01667"/>
</dbReference>
<dbReference type="SMR" id="P14912"/>
<dbReference type="UniPathway" id="UPA00372">
    <property type="reaction ID" value="UER00547"/>
</dbReference>
<dbReference type="GO" id="GO:0016207">
    <property type="term" value="F:4-coumarate-CoA ligase activity"/>
    <property type="evidence" value="ECO:0007669"/>
    <property type="project" value="UniProtKB-EC"/>
</dbReference>
<dbReference type="GO" id="GO:0005524">
    <property type="term" value="F:ATP binding"/>
    <property type="evidence" value="ECO:0007669"/>
    <property type="project" value="UniProtKB-KW"/>
</dbReference>
<dbReference type="GO" id="GO:0009698">
    <property type="term" value="P:phenylpropanoid metabolic process"/>
    <property type="evidence" value="ECO:0007669"/>
    <property type="project" value="UniProtKB-KW"/>
</dbReference>
<dbReference type="CDD" id="cd05904">
    <property type="entry name" value="4CL"/>
    <property type="match status" value="1"/>
</dbReference>
<dbReference type="FunFam" id="3.30.300.30:FF:000007">
    <property type="entry name" value="4-coumarate--CoA ligase 2"/>
    <property type="match status" value="1"/>
</dbReference>
<dbReference type="FunFam" id="3.40.50.12780:FF:000003">
    <property type="entry name" value="Long-chain-fatty-acid--CoA ligase FadD"/>
    <property type="match status" value="1"/>
</dbReference>
<dbReference type="Gene3D" id="3.30.300.30">
    <property type="match status" value="1"/>
</dbReference>
<dbReference type="Gene3D" id="3.40.50.12780">
    <property type="entry name" value="N-terminal domain of ligase-like"/>
    <property type="match status" value="1"/>
</dbReference>
<dbReference type="InterPro" id="IPR025110">
    <property type="entry name" value="AMP-bd_C"/>
</dbReference>
<dbReference type="InterPro" id="IPR045851">
    <property type="entry name" value="AMP-bd_C_sf"/>
</dbReference>
<dbReference type="InterPro" id="IPR020845">
    <property type="entry name" value="AMP-binding_CS"/>
</dbReference>
<dbReference type="InterPro" id="IPR000873">
    <property type="entry name" value="AMP-dep_synth/lig_dom"/>
</dbReference>
<dbReference type="InterPro" id="IPR042099">
    <property type="entry name" value="ANL_N_sf"/>
</dbReference>
<dbReference type="PANTHER" id="PTHR24096:SF406">
    <property type="entry name" value="4-COUMARATE--COA LIGASE 2"/>
    <property type="match status" value="1"/>
</dbReference>
<dbReference type="PANTHER" id="PTHR24096">
    <property type="entry name" value="LONG-CHAIN-FATTY-ACID--COA LIGASE"/>
    <property type="match status" value="1"/>
</dbReference>
<dbReference type="Pfam" id="PF00501">
    <property type="entry name" value="AMP-binding"/>
    <property type="match status" value="1"/>
</dbReference>
<dbReference type="Pfam" id="PF13193">
    <property type="entry name" value="AMP-binding_C"/>
    <property type="match status" value="1"/>
</dbReference>
<dbReference type="SUPFAM" id="SSF56801">
    <property type="entry name" value="Acetyl-CoA synthetase-like"/>
    <property type="match status" value="1"/>
</dbReference>
<dbReference type="PROSITE" id="PS00455">
    <property type="entry name" value="AMP_BINDING"/>
    <property type="match status" value="1"/>
</dbReference>